<organism>
    <name type="scientific">Rhodopseudomonas palustris (strain BisB18)</name>
    <dbReference type="NCBI Taxonomy" id="316056"/>
    <lineage>
        <taxon>Bacteria</taxon>
        <taxon>Pseudomonadati</taxon>
        <taxon>Pseudomonadota</taxon>
        <taxon>Alphaproteobacteria</taxon>
        <taxon>Hyphomicrobiales</taxon>
        <taxon>Nitrobacteraceae</taxon>
        <taxon>Rhodopseudomonas</taxon>
    </lineage>
</organism>
<accession>Q20Z78</accession>
<name>UREG_RHOPB</name>
<keyword id="KW-0143">Chaperone</keyword>
<keyword id="KW-0963">Cytoplasm</keyword>
<keyword id="KW-0342">GTP-binding</keyword>
<keyword id="KW-0996">Nickel insertion</keyword>
<keyword id="KW-0547">Nucleotide-binding</keyword>
<comment type="function">
    <text evidence="1">Facilitates the functional incorporation of the urease nickel metallocenter. This process requires GTP hydrolysis, probably effectuated by UreG.</text>
</comment>
<comment type="subunit">
    <text evidence="1">Homodimer. UreD, UreF and UreG form a complex that acts as a GTP-hydrolysis-dependent molecular chaperone, activating the urease apoprotein by helping to assemble the nickel containing metallocenter of UreC. The UreE protein probably delivers the nickel.</text>
</comment>
<comment type="subcellular location">
    <subcellularLocation>
        <location evidence="1">Cytoplasm</location>
    </subcellularLocation>
</comment>
<comment type="similarity">
    <text evidence="1">Belongs to the SIMIBI class G3E GTPase family. UreG subfamily.</text>
</comment>
<feature type="chain" id="PRO_1000145216" description="Urease accessory protein UreG">
    <location>
        <begin position="1"/>
        <end position="207"/>
    </location>
</feature>
<feature type="binding site" evidence="1">
    <location>
        <begin position="14"/>
        <end position="21"/>
    </location>
    <ligand>
        <name>GTP</name>
        <dbReference type="ChEBI" id="CHEBI:37565"/>
    </ligand>
</feature>
<evidence type="ECO:0000255" key="1">
    <source>
        <dbReference type="HAMAP-Rule" id="MF_01389"/>
    </source>
</evidence>
<reference key="1">
    <citation type="submission" date="2006-03" db="EMBL/GenBank/DDBJ databases">
        <title>Complete sequence of Rhodopseudomonas palustris BisB18.</title>
        <authorList>
            <consortium name="US DOE Joint Genome Institute"/>
            <person name="Copeland A."/>
            <person name="Lucas S."/>
            <person name="Lapidus A."/>
            <person name="Barry K."/>
            <person name="Detter J.C."/>
            <person name="Glavina del Rio T."/>
            <person name="Hammon N."/>
            <person name="Israni S."/>
            <person name="Dalin E."/>
            <person name="Tice H."/>
            <person name="Pitluck S."/>
            <person name="Chain P."/>
            <person name="Malfatti S."/>
            <person name="Shin M."/>
            <person name="Vergez L."/>
            <person name="Schmutz J."/>
            <person name="Larimer F."/>
            <person name="Land M."/>
            <person name="Hauser L."/>
            <person name="Pelletier D.A."/>
            <person name="Kyrpides N."/>
            <person name="Anderson I."/>
            <person name="Oda Y."/>
            <person name="Harwood C.S."/>
            <person name="Richardson P."/>
        </authorList>
    </citation>
    <scope>NUCLEOTIDE SEQUENCE [LARGE SCALE GENOMIC DNA]</scope>
    <source>
        <strain>BisB18</strain>
    </source>
</reference>
<protein>
    <recommendedName>
        <fullName evidence="1">Urease accessory protein UreG</fullName>
    </recommendedName>
</protein>
<dbReference type="EMBL" id="CP000301">
    <property type="protein sequence ID" value="ABD89558.1"/>
    <property type="molecule type" value="Genomic_DNA"/>
</dbReference>
<dbReference type="SMR" id="Q20Z78"/>
<dbReference type="STRING" id="316056.RPC_4032"/>
<dbReference type="KEGG" id="rpc:RPC_4032"/>
<dbReference type="eggNOG" id="COG0378">
    <property type="taxonomic scope" value="Bacteria"/>
</dbReference>
<dbReference type="HOGENOM" id="CLU_072144_1_0_5"/>
<dbReference type="OrthoDB" id="9802035at2"/>
<dbReference type="GO" id="GO:0005737">
    <property type="term" value="C:cytoplasm"/>
    <property type="evidence" value="ECO:0007669"/>
    <property type="project" value="UniProtKB-SubCell"/>
</dbReference>
<dbReference type="GO" id="GO:0005525">
    <property type="term" value="F:GTP binding"/>
    <property type="evidence" value="ECO:0007669"/>
    <property type="project" value="UniProtKB-KW"/>
</dbReference>
<dbReference type="GO" id="GO:0003924">
    <property type="term" value="F:GTPase activity"/>
    <property type="evidence" value="ECO:0007669"/>
    <property type="project" value="InterPro"/>
</dbReference>
<dbReference type="GO" id="GO:0016151">
    <property type="term" value="F:nickel cation binding"/>
    <property type="evidence" value="ECO:0007669"/>
    <property type="project" value="UniProtKB-UniRule"/>
</dbReference>
<dbReference type="GO" id="GO:0043419">
    <property type="term" value="P:urea catabolic process"/>
    <property type="evidence" value="ECO:0007669"/>
    <property type="project" value="InterPro"/>
</dbReference>
<dbReference type="CDD" id="cd05540">
    <property type="entry name" value="UreG"/>
    <property type="match status" value="1"/>
</dbReference>
<dbReference type="FunFam" id="3.40.50.300:FF:000208">
    <property type="entry name" value="Urease accessory protein UreG"/>
    <property type="match status" value="1"/>
</dbReference>
<dbReference type="Gene3D" id="3.40.50.300">
    <property type="entry name" value="P-loop containing nucleotide triphosphate hydrolases"/>
    <property type="match status" value="1"/>
</dbReference>
<dbReference type="HAMAP" id="MF_01389">
    <property type="entry name" value="UreG"/>
    <property type="match status" value="1"/>
</dbReference>
<dbReference type="InterPro" id="IPR003495">
    <property type="entry name" value="CobW/HypB/UreG_nucleotide-bd"/>
</dbReference>
<dbReference type="InterPro" id="IPR027417">
    <property type="entry name" value="P-loop_NTPase"/>
</dbReference>
<dbReference type="InterPro" id="IPR004400">
    <property type="entry name" value="UreG"/>
</dbReference>
<dbReference type="NCBIfam" id="TIGR00101">
    <property type="entry name" value="ureG"/>
    <property type="match status" value="1"/>
</dbReference>
<dbReference type="PANTHER" id="PTHR31715">
    <property type="entry name" value="UREASE ACCESSORY PROTEIN G"/>
    <property type="match status" value="1"/>
</dbReference>
<dbReference type="PANTHER" id="PTHR31715:SF0">
    <property type="entry name" value="UREASE ACCESSORY PROTEIN G"/>
    <property type="match status" value="1"/>
</dbReference>
<dbReference type="Pfam" id="PF02492">
    <property type="entry name" value="cobW"/>
    <property type="match status" value="1"/>
</dbReference>
<dbReference type="PIRSF" id="PIRSF005624">
    <property type="entry name" value="Ni-bind_GTPase"/>
    <property type="match status" value="1"/>
</dbReference>
<dbReference type="SUPFAM" id="SSF52540">
    <property type="entry name" value="P-loop containing nucleoside triphosphate hydrolases"/>
    <property type="match status" value="1"/>
</dbReference>
<gene>
    <name evidence="1" type="primary">ureG</name>
    <name type="ordered locus">RPC_4032</name>
</gene>
<proteinExistence type="inferred from homology"/>
<sequence length="207" mass="22152">MSDYHGPLRVGIGGPVGSGKTALMDLLCKTLRDRYQIAAITNDIYTKWDAEFLVRSGSLTQDRIVGVETGGCPHTAIREDASMNLAAVADMRAKFPDLDLVLIESGGDNLAATFSPELADLTIYVIDVAAGDKIPSKGGPGITRSDLLVINKIDLAPYVGASLDKMQIDAKRMRGERPFVMTNLKTQEGLDRIVGFIEAKGGLRAGS</sequence>